<organism>
    <name type="scientific">Mus musculus</name>
    <name type="common">Mouse</name>
    <dbReference type="NCBI Taxonomy" id="10090"/>
    <lineage>
        <taxon>Eukaryota</taxon>
        <taxon>Metazoa</taxon>
        <taxon>Chordata</taxon>
        <taxon>Craniata</taxon>
        <taxon>Vertebrata</taxon>
        <taxon>Euteleostomi</taxon>
        <taxon>Mammalia</taxon>
        <taxon>Eutheria</taxon>
        <taxon>Euarchontoglires</taxon>
        <taxon>Glires</taxon>
        <taxon>Rodentia</taxon>
        <taxon>Myomorpha</taxon>
        <taxon>Muroidea</taxon>
        <taxon>Muridae</taxon>
        <taxon>Murinae</taxon>
        <taxon>Mus</taxon>
        <taxon>Mus</taxon>
    </lineage>
</organism>
<dbReference type="EMBL" id="M14827">
    <property type="protein sequence ID" value="AAA39656.1"/>
    <property type="molecule type" value="mRNA"/>
</dbReference>
<dbReference type="PIR" id="I54414">
    <property type="entry name" value="I54414"/>
</dbReference>
<dbReference type="SMR" id="P14428"/>
<dbReference type="GlyCosmos" id="P14428">
    <property type="glycosylation" value="2 sites, No reported glycans"/>
</dbReference>
<dbReference type="iPTMnet" id="P14428"/>
<dbReference type="SwissPalm" id="P14428"/>
<dbReference type="jPOST" id="P14428"/>
<dbReference type="PeptideAtlas" id="P14428"/>
<dbReference type="ProteomicsDB" id="269801"/>
<dbReference type="Pumba" id="P14428"/>
<dbReference type="AGR" id="MGI:95904"/>
<dbReference type="MGI" id="MGI:95904">
    <property type="gene designation" value="H2-K1"/>
</dbReference>
<dbReference type="ChiTaRS" id="H2-K1">
    <property type="organism name" value="mouse"/>
</dbReference>
<dbReference type="Proteomes" id="UP000000589">
    <property type="component" value="Unplaced"/>
</dbReference>
<dbReference type="GO" id="GO:0009897">
    <property type="term" value="C:external side of plasma membrane"/>
    <property type="evidence" value="ECO:0000314"/>
    <property type="project" value="MGI"/>
</dbReference>
<dbReference type="GO" id="GO:0098553">
    <property type="term" value="C:lumenal side of endoplasmic reticulum membrane"/>
    <property type="evidence" value="ECO:0000304"/>
    <property type="project" value="Reactome"/>
</dbReference>
<dbReference type="GO" id="GO:0042612">
    <property type="term" value="C:MHC class I protein complex"/>
    <property type="evidence" value="ECO:0007669"/>
    <property type="project" value="UniProtKB-KW"/>
</dbReference>
<dbReference type="GO" id="GO:0030670">
    <property type="term" value="C:phagocytic vesicle membrane"/>
    <property type="evidence" value="ECO:0000304"/>
    <property type="project" value="Reactome"/>
</dbReference>
<dbReference type="GO" id="GO:0042605">
    <property type="term" value="F:peptide antigen binding"/>
    <property type="evidence" value="ECO:0000314"/>
    <property type="project" value="MGI"/>
</dbReference>
<dbReference type="GO" id="GO:0002485">
    <property type="term" value="P:antigen processing and presentation of endogenous peptide antigen via MHC class I via ER pathway, TAP-dependent"/>
    <property type="evidence" value="ECO:0000314"/>
    <property type="project" value="MGI"/>
</dbReference>
<dbReference type="GO" id="GO:0042590">
    <property type="term" value="P:antigen processing and presentation of exogenous peptide antigen via MHC class I"/>
    <property type="evidence" value="ECO:0000314"/>
    <property type="project" value="MGI"/>
</dbReference>
<dbReference type="GO" id="GO:0042742">
    <property type="term" value="P:defense response to bacterium"/>
    <property type="evidence" value="ECO:0000314"/>
    <property type="project" value="MGI"/>
</dbReference>
<dbReference type="GO" id="GO:0048839">
    <property type="term" value="P:inner ear development"/>
    <property type="evidence" value="ECO:0000314"/>
    <property type="project" value="MGI"/>
</dbReference>
<dbReference type="GO" id="GO:0010977">
    <property type="term" value="P:negative regulation of neuron projection development"/>
    <property type="evidence" value="ECO:0000314"/>
    <property type="project" value="MGI"/>
</dbReference>
<dbReference type="GO" id="GO:0001916">
    <property type="term" value="P:positive regulation of T cell mediated cytotoxicity"/>
    <property type="evidence" value="ECO:0000314"/>
    <property type="project" value="MGI"/>
</dbReference>
<dbReference type="GO" id="GO:0001913">
    <property type="term" value="P:T cell mediated cytotoxicity"/>
    <property type="evidence" value="ECO:0000314"/>
    <property type="project" value="MGI"/>
</dbReference>
<dbReference type="CDD" id="cd21019">
    <property type="entry name" value="IgC1_MHC_Ia_H-2Kb"/>
    <property type="match status" value="1"/>
</dbReference>
<dbReference type="CDD" id="cd12087">
    <property type="entry name" value="TM_EGFR-like"/>
    <property type="match status" value="1"/>
</dbReference>
<dbReference type="FunFam" id="2.60.40.10:FF:000014">
    <property type="entry name" value="H-2 class I histocompatibility antigen, alpha chain"/>
    <property type="match status" value="1"/>
</dbReference>
<dbReference type="FunFam" id="3.30.500.10:FF:000001">
    <property type="entry name" value="H-2 class I histocompatibility antigen, alpha chain"/>
    <property type="match status" value="1"/>
</dbReference>
<dbReference type="Gene3D" id="2.60.40.10">
    <property type="entry name" value="Immunoglobulins"/>
    <property type="match status" value="1"/>
</dbReference>
<dbReference type="Gene3D" id="3.30.500.10">
    <property type="entry name" value="MHC class I-like antigen recognition-like"/>
    <property type="match status" value="1"/>
</dbReference>
<dbReference type="InterPro" id="IPR007110">
    <property type="entry name" value="Ig-like_dom"/>
</dbReference>
<dbReference type="InterPro" id="IPR036179">
    <property type="entry name" value="Ig-like_dom_sf"/>
</dbReference>
<dbReference type="InterPro" id="IPR013783">
    <property type="entry name" value="Ig-like_fold"/>
</dbReference>
<dbReference type="InterPro" id="IPR003006">
    <property type="entry name" value="Ig/MHC_CS"/>
</dbReference>
<dbReference type="InterPro" id="IPR003597">
    <property type="entry name" value="Ig_C1-set"/>
</dbReference>
<dbReference type="InterPro" id="IPR050208">
    <property type="entry name" value="MHC_class-I_related"/>
</dbReference>
<dbReference type="InterPro" id="IPR011161">
    <property type="entry name" value="MHC_I-like_Ag-recog"/>
</dbReference>
<dbReference type="InterPro" id="IPR037055">
    <property type="entry name" value="MHC_I-like_Ag-recog_sf"/>
</dbReference>
<dbReference type="InterPro" id="IPR011162">
    <property type="entry name" value="MHC_I/II-like_Ag-recog"/>
</dbReference>
<dbReference type="InterPro" id="IPR001039">
    <property type="entry name" value="MHC_I_a_a1/a2"/>
</dbReference>
<dbReference type="InterPro" id="IPR010579">
    <property type="entry name" value="MHC_I_a_C"/>
</dbReference>
<dbReference type="PANTHER" id="PTHR16675:SF251">
    <property type="entry name" value="HLA CLASS I HISTOCOMPATIBILITY ANTIGEN, C ALPHA CHAIN"/>
    <property type="match status" value="1"/>
</dbReference>
<dbReference type="PANTHER" id="PTHR16675">
    <property type="entry name" value="MHC CLASS I-RELATED"/>
    <property type="match status" value="1"/>
</dbReference>
<dbReference type="Pfam" id="PF07654">
    <property type="entry name" value="C1-set"/>
    <property type="match status" value="1"/>
</dbReference>
<dbReference type="Pfam" id="PF00129">
    <property type="entry name" value="MHC_I"/>
    <property type="match status" value="1"/>
</dbReference>
<dbReference type="Pfam" id="PF06623">
    <property type="entry name" value="MHC_I_C"/>
    <property type="match status" value="1"/>
</dbReference>
<dbReference type="PRINTS" id="PR01638">
    <property type="entry name" value="MHCCLASSI"/>
</dbReference>
<dbReference type="SMART" id="SM00407">
    <property type="entry name" value="IGc1"/>
    <property type="match status" value="1"/>
</dbReference>
<dbReference type="SUPFAM" id="SSF48726">
    <property type="entry name" value="Immunoglobulin"/>
    <property type="match status" value="1"/>
</dbReference>
<dbReference type="SUPFAM" id="SSF54452">
    <property type="entry name" value="MHC antigen-recognition domain"/>
    <property type="match status" value="1"/>
</dbReference>
<dbReference type="PROSITE" id="PS50835">
    <property type="entry name" value="IG_LIKE"/>
    <property type="match status" value="1"/>
</dbReference>
<dbReference type="PROSITE" id="PS00290">
    <property type="entry name" value="IG_MHC"/>
    <property type="match status" value="1"/>
</dbReference>
<keyword id="KW-1015">Disulfide bond</keyword>
<keyword id="KW-0325">Glycoprotein</keyword>
<keyword id="KW-0391">Immunity</keyword>
<keyword id="KW-0472">Membrane</keyword>
<keyword id="KW-0490">MHC I</keyword>
<keyword id="KW-0597">Phosphoprotein</keyword>
<keyword id="KW-1185">Reference proteome</keyword>
<keyword id="KW-0812">Transmembrane</keyword>
<keyword id="KW-1133">Transmembrane helix</keyword>
<protein>
    <recommendedName>
        <fullName>H-2 class I histocompatibility antigen, K-Q alpha chain</fullName>
        <shortName>H-2K(Q)</shortName>
    </recommendedName>
</protein>
<name>HA1Q_MOUSE</name>
<feature type="chain" id="PRO_0000080741" description="H-2 class I histocompatibility antigen, K-Q alpha chain">
    <location>
        <begin position="1" status="less than"/>
        <end position="328"/>
    </location>
</feature>
<feature type="topological domain" description="Extracellular" evidence="2">
    <location>
        <begin position="1" status="less than"/>
        <end position="265"/>
    </location>
</feature>
<feature type="transmembrane region" description="Helical" evidence="2">
    <location>
        <begin position="266"/>
        <end position="289"/>
    </location>
</feature>
<feature type="topological domain" description="Cytoplasmic" evidence="2">
    <location>
        <begin position="290"/>
        <end position="328"/>
    </location>
</feature>
<feature type="domain" description="Ig-like C1-type">
    <location>
        <begin position="166"/>
        <end position="252"/>
    </location>
</feature>
<feature type="region of interest" description="Alpha-1">
    <location>
        <begin position="1" status="less than"/>
        <end position="71"/>
    </location>
</feature>
<feature type="region of interest" description="Alpha-2">
    <location>
        <begin position="72"/>
        <end position="163"/>
    </location>
</feature>
<feature type="region of interest" description="Alpha-3">
    <location>
        <begin position="164"/>
        <end position="255"/>
    </location>
</feature>
<feature type="region of interest" description="Connecting peptide">
    <location>
        <begin position="256"/>
        <end position="265"/>
    </location>
</feature>
<feature type="modified residue" description="Phosphoserine" evidence="1">
    <location>
        <position position="310"/>
    </location>
</feature>
<feature type="modified residue" description="Phosphoserine" evidence="5 6">
    <location>
        <position position="313"/>
    </location>
</feature>
<feature type="glycosylation site" description="N-linked (GlcNAc...) asparagine" evidence="2">
    <location>
        <position position="67"/>
    </location>
</feature>
<feature type="glycosylation site" description="N-linked (GlcNAc...) asparagine" evidence="2">
    <location>
        <position position="157"/>
    </location>
</feature>
<feature type="disulfide bond" evidence="3">
    <location>
        <begin position="82"/>
        <end position="145"/>
    </location>
</feature>
<feature type="disulfide bond" evidence="3">
    <location>
        <begin position="184"/>
        <end position="240"/>
    </location>
</feature>
<feature type="non-terminal residue">
    <location>
        <position position="1"/>
    </location>
</feature>
<comment type="function">
    <text>Involved in the presentation of foreign antigens to the immune system.</text>
</comment>
<comment type="subunit">
    <text>Heterodimer of an alpha chain and a beta chain (beta-2-microglobulin).</text>
</comment>
<comment type="subcellular location">
    <subcellularLocation>
        <location>Membrane</location>
        <topology>Single-pass type I membrane protein</topology>
    </subcellularLocation>
</comment>
<comment type="similarity">
    <text evidence="4">Belongs to the MHC class I family.</text>
</comment>
<evidence type="ECO:0000250" key="1">
    <source>
        <dbReference type="UniProtKB" id="P01900"/>
    </source>
</evidence>
<evidence type="ECO:0000255" key="2"/>
<evidence type="ECO:0000255" key="3">
    <source>
        <dbReference type="PROSITE-ProRule" id="PRU00114"/>
    </source>
</evidence>
<evidence type="ECO:0000305" key="4"/>
<evidence type="ECO:0007744" key="5">
    <source>
    </source>
</evidence>
<evidence type="ECO:0007744" key="6">
    <source>
    </source>
</evidence>
<sequence length="328" mass="36856">PRFISVGYVDDTELVRFDSDAENPRYEPRARWMEQVEPEYWERNTQIAKDNEQSSRVDLRTLLRYYNQSAGGSHTIQRMYGCDVGSDGRLLRGYEQVAYDGCDYIALNEDLKTWTAADMAALITKHKWEQAGAAERRRAYLEGACVEWLSRHLKNGNATLLRTDSPKAHVTHHSRPEDKVTLRCWALGFYPADITLTWQLNGEELTQDMELVETRPAGDGTFQKWASVVVPLGKEQYYTCHVYHQGLPKPLTLRWEPPPSAVSNTVIIAVLVVLGAAIVTGAVVAFVMMRRRNTGGKGGDYALAPGSQTSDLSLPDCKVMVHDPHSLA</sequence>
<accession>P14428</accession>
<reference key="1">
    <citation type="journal article" date="1985" name="Immunogenetics">
        <title>An H-2K gene of the tw32 mutant at the T/t complex is a close parent of an H-2Kq gene.</title>
        <authorList>
            <person name="Morita T."/>
            <person name="Delarbre C."/>
            <person name="Kress M."/>
            <person name="Kourilsky P."/>
            <person name="Gachelin G."/>
        </authorList>
    </citation>
    <scope>NUCLEOTIDE SEQUENCE [MRNA]</scope>
</reference>
<reference key="2">
    <citation type="journal article" date="2007" name="Proc. Natl. Acad. Sci. U.S.A.">
        <title>Large-scale phosphorylation analysis of mouse liver.</title>
        <authorList>
            <person name="Villen J."/>
            <person name="Beausoleil S.A."/>
            <person name="Gerber S.A."/>
            <person name="Gygi S.P."/>
        </authorList>
    </citation>
    <scope>PHOSPHORYLATION [LARGE SCALE ANALYSIS] AT SER-313</scope>
    <scope>IDENTIFICATION BY MASS SPECTROMETRY [LARGE SCALE ANALYSIS]</scope>
    <source>
        <tissue>Liver</tissue>
    </source>
</reference>
<reference key="3">
    <citation type="journal article" date="2010" name="Cell">
        <title>A tissue-specific atlas of mouse protein phosphorylation and expression.</title>
        <authorList>
            <person name="Huttlin E.L."/>
            <person name="Jedrychowski M.P."/>
            <person name="Elias J.E."/>
            <person name="Goswami T."/>
            <person name="Rad R."/>
            <person name="Beausoleil S.A."/>
            <person name="Villen J."/>
            <person name="Haas W."/>
            <person name="Sowa M.E."/>
            <person name="Gygi S.P."/>
        </authorList>
    </citation>
    <scope>PHOSPHORYLATION [LARGE SCALE ANALYSIS] AT SER-313</scope>
    <scope>IDENTIFICATION BY MASS SPECTROMETRY [LARGE SCALE ANALYSIS]</scope>
    <source>
        <tissue>Brown adipose tissue</tissue>
        <tissue>Kidney</tissue>
        <tissue>Lung</tissue>
        <tissue>Pancreas</tissue>
        <tissue>Spleen</tissue>
    </source>
</reference>
<gene>
    <name type="primary">H2-K1</name>
    <name type="synonym">H2-K</name>
</gene>
<proteinExistence type="evidence at protein level"/>